<name>CDGT_BACS3</name>
<feature type="signal peptide" evidence="3">
    <location>
        <begin position="1"/>
        <end position="27"/>
    </location>
</feature>
<feature type="chain" id="PRO_0000001439" description="Cyclomaltodextrin glucanotransferase">
    <location>
        <begin position="28"/>
        <end position="712"/>
    </location>
</feature>
<feature type="domain" description="IPT/TIG">
    <location>
        <begin position="526"/>
        <end position="606"/>
    </location>
</feature>
<feature type="domain" description="CBM20" evidence="2">
    <location>
        <begin position="607"/>
        <end position="712"/>
    </location>
</feature>
<feature type="region of interest" description="A1">
    <location>
        <begin position="28"/>
        <end position="165"/>
    </location>
</feature>
<feature type="region of interest" description="B">
    <location>
        <begin position="166"/>
        <end position="229"/>
    </location>
</feature>
<feature type="region of interest" description="A2">
    <location>
        <begin position="230"/>
        <end position="433"/>
    </location>
</feature>
<feature type="region of interest" description="C">
    <location>
        <begin position="434"/>
        <end position="522"/>
    </location>
</feature>
<feature type="region of interest" description="D">
    <location>
        <begin position="523"/>
        <end position="608"/>
    </location>
</feature>
<feature type="region of interest" description="E">
    <location>
        <begin position="609"/>
        <end position="712"/>
    </location>
</feature>
<feature type="active site" description="Nucleophile" evidence="1">
    <location>
        <position position="256"/>
    </location>
</feature>
<feature type="active site" description="Proton donor" evidence="1">
    <location>
        <position position="284"/>
    </location>
</feature>
<feature type="binding site" evidence="1">
    <location>
        <position position="54"/>
    </location>
    <ligand>
        <name>Ca(2+)</name>
        <dbReference type="ChEBI" id="CHEBI:29108"/>
        <label>1</label>
    </ligand>
</feature>
<feature type="binding site" evidence="1">
    <location>
        <position position="56"/>
    </location>
    <ligand>
        <name>Ca(2+)</name>
        <dbReference type="ChEBI" id="CHEBI:29108"/>
        <label>1</label>
    </ligand>
</feature>
<feature type="binding site" evidence="1">
    <location>
        <position position="59"/>
    </location>
    <ligand>
        <name>Ca(2+)</name>
        <dbReference type="ChEBI" id="CHEBI:29108"/>
        <label>1</label>
    </ligand>
</feature>
<feature type="binding site" evidence="1">
    <location>
        <position position="60"/>
    </location>
    <ligand>
        <name>Ca(2+)</name>
        <dbReference type="ChEBI" id="CHEBI:29108"/>
        <label>1</label>
    </ligand>
</feature>
<feature type="binding site" evidence="1">
    <location>
        <position position="78"/>
    </location>
    <ligand>
        <name>Ca(2+)</name>
        <dbReference type="ChEBI" id="CHEBI:29108"/>
        <label>1</label>
    </ligand>
</feature>
<feature type="binding site" evidence="1">
    <location>
        <position position="80"/>
    </location>
    <ligand>
        <name>Ca(2+)</name>
        <dbReference type="ChEBI" id="CHEBI:29108"/>
        <label>1</label>
    </ligand>
</feature>
<feature type="binding site" evidence="1">
    <location>
        <begin position="127"/>
        <end position="128"/>
    </location>
    <ligand>
        <name>substrate</name>
    </ligand>
</feature>
<feature type="binding site" evidence="1">
    <location>
        <position position="166"/>
    </location>
    <ligand>
        <name>Ca(2+)</name>
        <dbReference type="ChEBI" id="CHEBI:29108"/>
        <label>2</label>
    </ligand>
</feature>
<feature type="binding site" evidence="1">
    <location>
        <position position="167"/>
    </location>
    <ligand>
        <name>substrate</name>
    </ligand>
</feature>
<feature type="binding site" evidence="1">
    <location>
        <position position="217"/>
    </location>
    <ligand>
        <name>Ca(2+)</name>
        <dbReference type="ChEBI" id="CHEBI:29108"/>
        <label>2</label>
    </ligand>
</feature>
<feature type="binding site" evidence="1">
    <location>
        <begin position="220"/>
        <end position="223"/>
    </location>
    <ligand>
        <name>substrate</name>
    </ligand>
</feature>
<feature type="binding site" evidence="1">
    <location>
        <position position="226"/>
    </location>
    <ligand>
        <name>Ca(2+)</name>
        <dbReference type="ChEBI" id="CHEBI:29108"/>
        <label>2</label>
    </ligand>
</feature>
<feature type="binding site" evidence="1">
    <location>
        <position position="254"/>
    </location>
    <ligand>
        <name>substrate</name>
    </ligand>
</feature>
<feature type="binding site" evidence="1">
    <location>
        <begin position="259"/>
        <end position="260"/>
    </location>
    <ligand>
        <name>substrate</name>
    </ligand>
</feature>
<feature type="binding site" evidence="1">
    <location>
        <position position="260"/>
    </location>
    <ligand>
        <name>Ca(2+)</name>
        <dbReference type="ChEBI" id="CHEBI:29108"/>
        <label>2</label>
    </ligand>
</feature>
<feature type="binding site" evidence="1">
    <location>
        <position position="354"/>
    </location>
    <ligand>
        <name>substrate</name>
    </ligand>
</feature>
<feature type="binding site" evidence="1">
    <location>
        <position position="398"/>
    </location>
    <ligand>
        <name>substrate</name>
    </ligand>
</feature>
<feature type="binding site" evidence="1">
    <location>
        <position position="402"/>
    </location>
    <ligand>
        <name>substrate</name>
    </ligand>
</feature>
<feature type="site" description="Transition state stabilizer" evidence="1">
    <location>
        <position position="355"/>
    </location>
</feature>
<feature type="disulfide bond" evidence="1">
    <location>
        <begin position="70"/>
        <end position="77"/>
    </location>
</feature>
<feature type="sequence conflict" description="In Ref. 2; BAA00077." evidence="4" ref="2">
    <original>VPGGI</original>
    <variation>SWRHL</variation>
    <location>
        <begin position="582"/>
        <end position="586"/>
    </location>
</feature>
<gene>
    <name type="primary">cgt</name>
</gene>
<organism>
    <name type="scientific">Bacillus sp. (strain 38-2)</name>
    <dbReference type="NCBI Taxonomy" id="1412"/>
    <lineage>
        <taxon>Bacteria</taxon>
        <taxon>Bacillati</taxon>
        <taxon>Bacillota</taxon>
        <taxon>Bacilli</taxon>
        <taxon>Bacillales</taxon>
        <taxon>Bacillaceae</taxon>
        <taxon>Bacillus</taxon>
    </lineage>
</organism>
<dbReference type="EC" id="2.4.1.19"/>
<dbReference type="EMBL" id="M19880">
    <property type="protein sequence ID" value="AAA22309.1"/>
    <property type="molecule type" value="Genomic_DNA"/>
</dbReference>
<dbReference type="EMBL" id="D00129">
    <property type="protein sequence ID" value="BAA00077.1"/>
    <property type="molecule type" value="Genomic_DNA"/>
</dbReference>
<dbReference type="SMR" id="P09121"/>
<dbReference type="CAZy" id="CBM20">
    <property type="family name" value="Carbohydrate-Binding Module Family 20"/>
</dbReference>
<dbReference type="CAZy" id="GH13">
    <property type="family name" value="Glycoside Hydrolase Family 13"/>
</dbReference>
<dbReference type="GO" id="GO:0005576">
    <property type="term" value="C:extracellular region"/>
    <property type="evidence" value="ECO:0007669"/>
    <property type="project" value="UniProtKB-SubCell"/>
</dbReference>
<dbReference type="GO" id="GO:0004556">
    <property type="term" value="F:alpha-amylase activity"/>
    <property type="evidence" value="ECO:0007669"/>
    <property type="project" value="InterPro"/>
</dbReference>
<dbReference type="GO" id="GO:0043895">
    <property type="term" value="F:cyclomaltodextrin glucanotransferase activity"/>
    <property type="evidence" value="ECO:0007669"/>
    <property type="project" value="UniProtKB-EC"/>
</dbReference>
<dbReference type="GO" id="GO:0046872">
    <property type="term" value="F:metal ion binding"/>
    <property type="evidence" value="ECO:0007669"/>
    <property type="project" value="UniProtKB-KW"/>
</dbReference>
<dbReference type="GO" id="GO:2001070">
    <property type="term" value="F:starch binding"/>
    <property type="evidence" value="ECO:0007669"/>
    <property type="project" value="InterPro"/>
</dbReference>
<dbReference type="GO" id="GO:0005975">
    <property type="term" value="P:carbohydrate metabolic process"/>
    <property type="evidence" value="ECO:0007669"/>
    <property type="project" value="InterPro"/>
</dbReference>
<dbReference type="CDD" id="cd11320">
    <property type="entry name" value="AmyAc_AmyMalt_CGTase_like"/>
    <property type="match status" value="1"/>
</dbReference>
<dbReference type="CDD" id="cd05807">
    <property type="entry name" value="CBM20_CGTase"/>
    <property type="match status" value="1"/>
</dbReference>
<dbReference type="CDD" id="cd00604">
    <property type="entry name" value="IPT_CGTD"/>
    <property type="match status" value="1"/>
</dbReference>
<dbReference type="Gene3D" id="3.20.20.80">
    <property type="entry name" value="Glycosidases"/>
    <property type="match status" value="1"/>
</dbReference>
<dbReference type="Gene3D" id="2.60.40.1180">
    <property type="entry name" value="Golgi alpha-mannosidase II"/>
    <property type="match status" value="1"/>
</dbReference>
<dbReference type="Gene3D" id="2.60.40.10">
    <property type="entry name" value="Immunoglobulins"/>
    <property type="match status" value="2"/>
</dbReference>
<dbReference type="InterPro" id="IPR006048">
    <property type="entry name" value="A-amylase/branching_C"/>
</dbReference>
<dbReference type="InterPro" id="IPR031319">
    <property type="entry name" value="A-amylase_C"/>
</dbReference>
<dbReference type="InterPro" id="IPR006046">
    <property type="entry name" value="Alpha_amylase"/>
</dbReference>
<dbReference type="InterPro" id="IPR013784">
    <property type="entry name" value="Carb-bd-like_fold"/>
</dbReference>
<dbReference type="InterPro" id="IPR002044">
    <property type="entry name" value="CBM20"/>
</dbReference>
<dbReference type="InterPro" id="IPR006047">
    <property type="entry name" value="Glyco_hydro_13_cat_dom"/>
</dbReference>
<dbReference type="InterPro" id="IPR013780">
    <property type="entry name" value="Glyco_hydro_b"/>
</dbReference>
<dbReference type="InterPro" id="IPR017853">
    <property type="entry name" value="Glycoside_hydrolase_SF"/>
</dbReference>
<dbReference type="InterPro" id="IPR013783">
    <property type="entry name" value="Ig-like_fold"/>
</dbReference>
<dbReference type="InterPro" id="IPR014756">
    <property type="entry name" value="Ig_E-set"/>
</dbReference>
<dbReference type="PANTHER" id="PTHR10357:SF215">
    <property type="entry name" value="ALPHA-AMYLASE 1"/>
    <property type="match status" value="1"/>
</dbReference>
<dbReference type="PANTHER" id="PTHR10357">
    <property type="entry name" value="ALPHA-AMYLASE FAMILY MEMBER"/>
    <property type="match status" value="1"/>
</dbReference>
<dbReference type="Pfam" id="PF00128">
    <property type="entry name" value="Alpha-amylase"/>
    <property type="match status" value="1"/>
</dbReference>
<dbReference type="Pfam" id="PF02806">
    <property type="entry name" value="Alpha-amylase_C"/>
    <property type="match status" value="1"/>
</dbReference>
<dbReference type="Pfam" id="PF00686">
    <property type="entry name" value="CBM_20"/>
    <property type="match status" value="1"/>
</dbReference>
<dbReference type="PRINTS" id="PR00110">
    <property type="entry name" value="ALPHAAMYLASE"/>
</dbReference>
<dbReference type="SMART" id="SM00642">
    <property type="entry name" value="Aamy"/>
    <property type="match status" value="1"/>
</dbReference>
<dbReference type="SMART" id="SM00632">
    <property type="entry name" value="Aamy_C"/>
    <property type="match status" value="1"/>
</dbReference>
<dbReference type="SMART" id="SM01065">
    <property type="entry name" value="CBM_2"/>
    <property type="match status" value="1"/>
</dbReference>
<dbReference type="SUPFAM" id="SSF51445">
    <property type="entry name" value="(Trans)glycosidases"/>
    <property type="match status" value="1"/>
</dbReference>
<dbReference type="SUPFAM" id="SSF81296">
    <property type="entry name" value="E set domains"/>
    <property type="match status" value="1"/>
</dbReference>
<dbReference type="SUPFAM" id="SSF51011">
    <property type="entry name" value="Glycosyl hydrolase domain"/>
    <property type="match status" value="1"/>
</dbReference>
<dbReference type="SUPFAM" id="SSF49452">
    <property type="entry name" value="Starch-binding domain-like"/>
    <property type="match status" value="1"/>
</dbReference>
<dbReference type="PROSITE" id="PS51166">
    <property type="entry name" value="CBM20"/>
    <property type="match status" value="1"/>
</dbReference>
<proteinExistence type="evidence at protein level"/>
<keyword id="KW-0106">Calcium</keyword>
<keyword id="KW-0903">Direct protein sequencing</keyword>
<keyword id="KW-1015">Disulfide bond</keyword>
<keyword id="KW-0328">Glycosyltransferase</keyword>
<keyword id="KW-0479">Metal-binding</keyword>
<keyword id="KW-0964">Secreted</keyword>
<keyword id="KW-0732">Signal</keyword>
<keyword id="KW-0808">Transferase</keyword>
<reference key="1">
    <citation type="journal article" date="1988" name="J. Gen. Microbiol.">
        <title>Molecular cloning and nucleotide sequence of the cyclomaltodextrin glucanotransferase gene from the alkalophilic Bacillus sp. strain no. 38-2.</title>
        <authorList>
            <person name="Kaneko T."/>
            <person name="Hamamoto T."/>
            <person name="Horikoshi K."/>
        </authorList>
    </citation>
    <scope>NUCLEOTIDE SEQUENCE [GENOMIC DNA]</scope>
    <scope>PROTEIN SEQUENCE OF 28-44</scope>
</reference>
<reference key="2">
    <citation type="journal article" date="1987" name="Agric. Biol. Chem.">
        <title>Nucleotide sequence of the cyclomaltodextrin glucanotransferase (CGTase) gene from alkalophilic Bacillus sp. strain No. 38-2.</title>
        <authorList>
            <person name="Hamamoto T."/>
            <person name="Kaneko T."/>
            <person name="Horikoshi K."/>
        </authorList>
    </citation>
    <scope>NUCLEOTIDE SEQUENCE [GENOMIC DNA] OF 1-586</scope>
</reference>
<protein>
    <recommendedName>
        <fullName>Cyclomaltodextrin glucanotransferase</fullName>
        <ecNumber>2.4.1.19</ecNumber>
    </recommendedName>
    <alternativeName>
        <fullName>Cyclodextrin-glycosyltransferase</fullName>
        <shortName>CGTase</shortName>
    </alternativeName>
</protein>
<evidence type="ECO:0000250" key="1"/>
<evidence type="ECO:0000255" key="2">
    <source>
        <dbReference type="PROSITE-ProRule" id="PRU00594"/>
    </source>
</evidence>
<evidence type="ECO:0000269" key="3">
    <source>
    </source>
</evidence>
<evidence type="ECO:0000305" key="4"/>
<comment type="catalytic activity">
    <reaction>
        <text>Cyclizes part of a (1-&gt;4)-alpha-D-glucan chain by formation of a (1-&gt;4)-alpha-D-glucosidic bond.</text>
        <dbReference type="EC" id="2.4.1.19"/>
    </reaction>
</comment>
<comment type="cofactor">
    <cofactor evidence="1">
        <name>Ca(2+)</name>
        <dbReference type="ChEBI" id="CHEBI:29108"/>
    </cofactor>
    <text evidence="1">Binds 2 calcium ions per subunit.</text>
</comment>
<comment type="subunit">
    <text>Monomer.</text>
</comment>
<comment type="subcellular location">
    <subcellularLocation>
        <location evidence="1">Secreted</location>
    </subcellularLocation>
</comment>
<comment type="domain">
    <text>May consist of two protein domains: the one in the N-terminal side cleaves the alpha-1,4-glucosidic bond in starch, and the other in the C-terminal side catalyzes other activities, including the reconstitution of an alpha-1,4-glucosidic linkage for cyclizing the maltooligosaccharide produced.</text>
</comment>
<comment type="similarity">
    <text evidence="4">Belongs to the glycosyl hydrolase 13 family.</text>
</comment>
<sequence>MKRFMKLTAVWTLWLSLTLGLLSPVHAAPDTSVSNKQNFSTDVIYQIFTDRFSDGNPANNPTGAAFDGSCTNLRLYCGGDWQGIINKINDGYLTGMGITAIWISQPVENIYSVINYSGVHNTAYHGYWARDFKKTNPAYGTMQDFKNLIDTAHAHNIKVIIDFAPNHTSPASSDDPSFAENGRLYDNGNLLGGYTNDTQNLFHHYGGTDFSTIENGIYKNLYDLADLNHNNSSVDVYLKDAIKMWLDLGVDGIRVDAVKHMPFGWQKSFMSTINNYKPVFNFGEWFLGVNEISPEYHQFANESGMSLLDFPFAQKARQVFRDNTDNMYGLKAMLEGSEVDYAQVNDQVTFIDNHDMERFHTSNGDRRKLEQALAFTLTSRGVPAIYYGSEQYMSGGNDPDNRARIPSFSTTTTAYQVIQKLAPLRKSNPAIAYGSTQERWINNDVIIYERKFGNNVAVVAINRNMNTPASITGLVTSLPQGSYNDVLGGILNGNTLTVGAGGAASNFTLAPGGTAVWQYTTDATAPINGNVGPMMAKAGVTITIDGRASARQGTVYFGTTAVTGADIVAWEDTQIQVKILRVPGGIYDIRVANAAGAASNIYDNFEVLTGDQVTVRFVINNATTALGQNVFLTGNVSELGNWDPNNAIGPMYNQVVYQYPTWYYDVSVPAGQTIEFKFLKKQGSTVTWEGGANRTFTTPTSGTATVNVNWQP</sequence>
<accession>P09121</accession>